<name>YVYF_BACSU</name>
<gene>
    <name type="primary">yvyF</name>
    <name type="synonym">yviB</name>
    <name type="ordered locus">BSU35440</name>
</gene>
<proteinExistence type="predicted"/>
<evidence type="ECO:0000305" key="1"/>
<reference key="1">
    <citation type="journal article" date="1994" name="J. Bacteriol.">
        <title>Identification of flagellar synthesis regulatory and structural genes in a sigma D-dependent operon of Bacillus subtilis.</title>
        <authorList>
            <person name="Mirel D.B."/>
            <person name="Lauer P."/>
            <person name="Chamberlin M.J."/>
        </authorList>
    </citation>
    <scope>NUCLEOTIDE SEQUENCE [GENOMIC DNA]</scope>
    <source>
        <strain>168</strain>
    </source>
</reference>
<reference key="2">
    <citation type="journal article" date="1996" name="Microbiology">
        <title>Sequence of the 305 degrees-307 degrees region of the Bacillus subtilis chromosome.</title>
        <authorList>
            <person name="Soldo B."/>
            <person name="Lazarevic V."/>
            <person name="Mauel C."/>
            <person name="Karamata D."/>
        </authorList>
    </citation>
    <scope>NUCLEOTIDE SEQUENCE [GENOMIC DNA]</scope>
    <source>
        <strain>168</strain>
    </source>
</reference>
<reference key="3">
    <citation type="journal article" date="1997" name="Nature">
        <title>The complete genome sequence of the Gram-positive bacterium Bacillus subtilis.</title>
        <authorList>
            <person name="Kunst F."/>
            <person name="Ogasawara N."/>
            <person name="Moszer I."/>
            <person name="Albertini A.M."/>
            <person name="Alloni G."/>
            <person name="Azevedo V."/>
            <person name="Bertero M.G."/>
            <person name="Bessieres P."/>
            <person name="Bolotin A."/>
            <person name="Borchert S."/>
            <person name="Borriss R."/>
            <person name="Boursier L."/>
            <person name="Brans A."/>
            <person name="Braun M."/>
            <person name="Brignell S.C."/>
            <person name="Bron S."/>
            <person name="Brouillet S."/>
            <person name="Bruschi C.V."/>
            <person name="Caldwell B."/>
            <person name="Capuano V."/>
            <person name="Carter N.M."/>
            <person name="Choi S.-K."/>
            <person name="Codani J.-J."/>
            <person name="Connerton I.F."/>
            <person name="Cummings N.J."/>
            <person name="Daniel R.A."/>
            <person name="Denizot F."/>
            <person name="Devine K.M."/>
            <person name="Duesterhoeft A."/>
            <person name="Ehrlich S.D."/>
            <person name="Emmerson P.T."/>
            <person name="Entian K.-D."/>
            <person name="Errington J."/>
            <person name="Fabret C."/>
            <person name="Ferrari E."/>
            <person name="Foulger D."/>
            <person name="Fritz C."/>
            <person name="Fujita M."/>
            <person name="Fujita Y."/>
            <person name="Fuma S."/>
            <person name="Galizzi A."/>
            <person name="Galleron N."/>
            <person name="Ghim S.-Y."/>
            <person name="Glaser P."/>
            <person name="Goffeau A."/>
            <person name="Golightly E.J."/>
            <person name="Grandi G."/>
            <person name="Guiseppi G."/>
            <person name="Guy B.J."/>
            <person name="Haga K."/>
            <person name="Haiech J."/>
            <person name="Harwood C.R."/>
            <person name="Henaut A."/>
            <person name="Hilbert H."/>
            <person name="Holsappel S."/>
            <person name="Hosono S."/>
            <person name="Hullo M.-F."/>
            <person name="Itaya M."/>
            <person name="Jones L.-M."/>
            <person name="Joris B."/>
            <person name="Karamata D."/>
            <person name="Kasahara Y."/>
            <person name="Klaerr-Blanchard M."/>
            <person name="Klein C."/>
            <person name="Kobayashi Y."/>
            <person name="Koetter P."/>
            <person name="Koningstein G."/>
            <person name="Krogh S."/>
            <person name="Kumano M."/>
            <person name="Kurita K."/>
            <person name="Lapidus A."/>
            <person name="Lardinois S."/>
            <person name="Lauber J."/>
            <person name="Lazarevic V."/>
            <person name="Lee S.-M."/>
            <person name="Levine A."/>
            <person name="Liu H."/>
            <person name="Masuda S."/>
            <person name="Mauel C."/>
            <person name="Medigue C."/>
            <person name="Medina N."/>
            <person name="Mellado R.P."/>
            <person name="Mizuno M."/>
            <person name="Moestl D."/>
            <person name="Nakai S."/>
            <person name="Noback M."/>
            <person name="Noone D."/>
            <person name="O'Reilly M."/>
            <person name="Ogawa K."/>
            <person name="Ogiwara A."/>
            <person name="Oudega B."/>
            <person name="Park S.-H."/>
            <person name="Parro V."/>
            <person name="Pohl T.M."/>
            <person name="Portetelle D."/>
            <person name="Porwollik S."/>
            <person name="Prescott A.M."/>
            <person name="Presecan E."/>
            <person name="Pujic P."/>
            <person name="Purnelle B."/>
            <person name="Rapoport G."/>
            <person name="Rey M."/>
            <person name="Reynolds S."/>
            <person name="Rieger M."/>
            <person name="Rivolta C."/>
            <person name="Rocha E."/>
            <person name="Roche B."/>
            <person name="Rose M."/>
            <person name="Sadaie Y."/>
            <person name="Sato T."/>
            <person name="Scanlan E."/>
            <person name="Schleich S."/>
            <person name="Schroeter R."/>
            <person name="Scoffone F."/>
            <person name="Sekiguchi J."/>
            <person name="Sekowska A."/>
            <person name="Seror S.J."/>
            <person name="Serror P."/>
            <person name="Shin B.-S."/>
            <person name="Soldo B."/>
            <person name="Sorokin A."/>
            <person name="Tacconi E."/>
            <person name="Takagi T."/>
            <person name="Takahashi H."/>
            <person name="Takemaru K."/>
            <person name="Takeuchi M."/>
            <person name="Tamakoshi A."/>
            <person name="Tanaka T."/>
            <person name="Terpstra P."/>
            <person name="Tognoni A."/>
            <person name="Tosato V."/>
            <person name="Uchiyama S."/>
            <person name="Vandenbol M."/>
            <person name="Vannier F."/>
            <person name="Vassarotti A."/>
            <person name="Viari A."/>
            <person name="Wambutt R."/>
            <person name="Wedler E."/>
            <person name="Wedler H."/>
            <person name="Weitzenegger T."/>
            <person name="Winters P."/>
            <person name="Wipat A."/>
            <person name="Yamamoto H."/>
            <person name="Yamane K."/>
            <person name="Yasumoto K."/>
            <person name="Yata K."/>
            <person name="Yoshida K."/>
            <person name="Yoshikawa H.-F."/>
            <person name="Zumstein E."/>
            <person name="Yoshikawa H."/>
            <person name="Danchin A."/>
        </authorList>
    </citation>
    <scope>NUCLEOTIDE SEQUENCE [LARGE SCALE GENOMIC DNA]</scope>
    <source>
        <strain>168</strain>
    </source>
</reference>
<sequence length="139" mass="16232">MGELANCPKCNALFLKTKLQTVCQACIKEEEKSFETVYKFLRKQENRQSTLSRITEETGVEEELILKFIRQKRIQITHLPNLAYPCERCGTSIREGKFCKACQSDIKDQMDHLNHEDALKIEKENSKKDTYYAYNTKNS</sequence>
<accession>P39807</accession>
<dbReference type="EMBL" id="L14437">
    <property type="protein sequence ID" value="AAB59016.1"/>
    <property type="molecule type" value="Genomic_DNA"/>
</dbReference>
<dbReference type="EMBL" id="U56901">
    <property type="protein sequence ID" value="AAC44943.1"/>
    <property type="molecule type" value="Genomic_DNA"/>
</dbReference>
<dbReference type="EMBL" id="AL009126">
    <property type="protein sequence ID" value="CAB15561.1"/>
    <property type="molecule type" value="Genomic_DNA"/>
</dbReference>
<dbReference type="PIR" id="B70049">
    <property type="entry name" value="B70049"/>
</dbReference>
<dbReference type="RefSeq" id="NP_391424.1">
    <property type="nucleotide sequence ID" value="NC_000964.3"/>
</dbReference>
<dbReference type="RefSeq" id="WP_003227995.1">
    <property type="nucleotide sequence ID" value="NZ_OZ025638.1"/>
</dbReference>
<dbReference type="FunCoup" id="P39807">
    <property type="interactions" value="19"/>
</dbReference>
<dbReference type="STRING" id="224308.BSU35440"/>
<dbReference type="PaxDb" id="224308-BSU35440"/>
<dbReference type="EnsemblBacteria" id="CAB15561">
    <property type="protein sequence ID" value="CAB15561"/>
    <property type="gene ID" value="BSU_35440"/>
</dbReference>
<dbReference type="GeneID" id="936743"/>
<dbReference type="KEGG" id="bsu:BSU35440"/>
<dbReference type="PATRIC" id="fig|224308.179.peg.3835"/>
<dbReference type="eggNOG" id="ENOG5032TKA">
    <property type="taxonomic scope" value="Bacteria"/>
</dbReference>
<dbReference type="InParanoid" id="P39807"/>
<dbReference type="OrthoDB" id="1739831at2"/>
<dbReference type="BioCyc" id="BSUB:BSU35440-MONOMER"/>
<dbReference type="Proteomes" id="UP000001570">
    <property type="component" value="Chromosome"/>
</dbReference>
<dbReference type="GO" id="GO:0044781">
    <property type="term" value="P:bacterial-type flagellum organization"/>
    <property type="evidence" value="ECO:0007669"/>
    <property type="project" value="UniProtKB-KW"/>
</dbReference>
<dbReference type="InterPro" id="IPR022258">
    <property type="entry name" value="Flagellar_operon_YvyF"/>
</dbReference>
<dbReference type="NCBIfam" id="TIGR03826">
    <property type="entry name" value="YvyF"/>
    <property type="match status" value="1"/>
</dbReference>
<feature type="chain" id="PRO_0000049947" description="Uncharacterized protein YvyF">
    <location>
        <begin position="1"/>
        <end position="139"/>
    </location>
</feature>
<keyword id="KW-1005">Bacterial flagellum biogenesis</keyword>
<keyword id="KW-1185">Reference proteome</keyword>
<protein>
    <recommendedName>
        <fullName>Uncharacterized protein YvyF</fullName>
    </recommendedName>
</protein>
<comment type="function">
    <text>May be involved in the assembly, structure, or function of the flagellum. May polymerize to form a filamentous structure that is part of the flagellum.</text>
</comment>
<comment type="similarity">
    <text evidence="1">To S.typhimurium FliF.</text>
</comment>
<organism>
    <name type="scientific">Bacillus subtilis (strain 168)</name>
    <dbReference type="NCBI Taxonomy" id="224308"/>
    <lineage>
        <taxon>Bacteria</taxon>
        <taxon>Bacillati</taxon>
        <taxon>Bacillota</taxon>
        <taxon>Bacilli</taxon>
        <taxon>Bacillales</taxon>
        <taxon>Bacillaceae</taxon>
        <taxon>Bacillus</taxon>
    </lineage>
</organism>